<comment type="function">
    <text evidence="1">This peptide both inhibits the activity of the angiotensin-converting enzyme (ACE) and enhances the action of bradykinin by inhibiting the peptidases that inactivate it. It acts as an indirect hypotensive agent (By similarity).</text>
</comment>
<comment type="subcellular location">
    <subcellularLocation>
        <location evidence="3">Secreted</location>
    </subcellularLocation>
</comment>
<comment type="tissue specificity">
    <text>Expressed by the venom gland.</text>
</comment>
<comment type="similarity">
    <text evidence="4">Belongs to the bradykinin-potentiating peptide family.</text>
</comment>
<protein>
    <recommendedName>
        <fullName evidence="2">Bradykinin-potentiating peptide 13a</fullName>
        <shortName evidence="2">BPP-13a</shortName>
    </recommendedName>
</protein>
<feature type="peptide" id="PRO_0000343183" description="Bradykinin-potentiating peptide 13a" evidence="3">
    <location>
        <begin position="1"/>
        <end position="13"/>
    </location>
</feature>
<feature type="modified residue" description="Pyrrolidone carboxylic acid" evidence="3">
    <location>
        <position position="1"/>
    </location>
</feature>
<sequence length="13" mass="1388">QGGWPRPGPEIPP</sequence>
<reference key="1">
    <citation type="journal article" date="2008" name="J. Mass Spectrom.">
        <title>Peptide fingerprinting of snake venoms by direct infusion nano-electrospray ionization mass spectrometry: potential use in venom identification and taxonomy.</title>
        <authorList>
            <person name="Souza G.H.M.F."/>
            <person name="Catharino R.R."/>
            <person name="Ifa D.R."/>
            <person name="Eberlin M.N."/>
            <person name="Hyslop S."/>
        </authorList>
    </citation>
    <scope>PROTEIN SEQUENCE</scope>
    <scope>IDENTIFICATION BY MASS SPECTROMETRY</scope>
    <scope>SUBCELLULAR LOCATION</scope>
    <scope>PYROGLUTAMATE FORMATION AT GLN-1</scope>
    <source>
        <tissue>Venom</tissue>
    </source>
</reference>
<accession>P0C7R9</accession>
<proteinExistence type="evidence at protein level"/>
<name>BPPDA_BOTLC</name>
<evidence type="ECO:0000250" key="1"/>
<evidence type="ECO:0000250" key="2">
    <source>
        <dbReference type="UniProtKB" id="Q6LEM5"/>
    </source>
</evidence>
<evidence type="ECO:0000269" key="3">
    <source>
    </source>
</evidence>
<evidence type="ECO:0000305" key="4"/>
<dbReference type="GO" id="GO:0005576">
    <property type="term" value="C:extracellular region"/>
    <property type="evidence" value="ECO:0007669"/>
    <property type="project" value="UniProtKB-SubCell"/>
</dbReference>
<dbReference type="GO" id="GO:0030414">
    <property type="term" value="F:peptidase inhibitor activity"/>
    <property type="evidence" value="ECO:0007669"/>
    <property type="project" value="UniProtKB-KW"/>
</dbReference>
<dbReference type="GO" id="GO:0090729">
    <property type="term" value="F:toxin activity"/>
    <property type="evidence" value="ECO:0007669"/>
    <property type="project" value="UniProtKB-KW"/>
</dbReference>
<dbReference type="GO" id="GO:0008217">
    <property type="term" value="P:regulation of blood pressure"/>
    <property type="evidence" value="ECO:0007669"/>
    <property type="project" value="UniProtKB-KW"/>
</dbReference>
<keyword id="KW-0903">Direct protein sequencing</keyword>
<keyword id="KW-0382">Hypotensive agent</keyword>
<keyword id="KW-0481">Metalloenzyme inhibitor</keyword>
<keyword id="KW-0483">Metalloprotease inhibitor</keyword>
<keyword id="KW-0646">Protease inhibitor</keyword>
<keyword id="KW-0873">Pyrrolidone carboxylic acid</keyword>
<keyword id="KW-0964">Secreted</keyword>
<keyword id="KW-0800">Toxin</keyword>
<organism>
    <name type="scientific">Bothrops leucurus</name>
    <name type="common">Whitetail lancehead</name>
    <dbReference type="NCBI Taxonomy" id="157295"/>
    <lineage>
        <taxon>Eukaryota</taxon>
        <taxon>Metazoa</taxon>
        <taxon>Chordata</taxon>
        <taxon>Craniata</taxon>
        <taxon>Vertebrata</taxon>
        <taxon>Euteleostomi</taxon>
        <taxon>Lepidosauria</taxon>
        <taxon>Squamata</taxon>
        <taxon>Bifurcata</taxon>
        <taxon>Unidentata</taxon>
        <taxon>Episquamata</taxon>
        <taxon>Toxicofera</taxon>
        <taxon>Serpentes</taxon>
        <taxon>Colubroidea</taxon>
        <taxon>Viperidae</taxon>
        <taxon>Crotalinae</taxon>
        <taxon>Bothrops</taxon>
    </lineage>
</organism>